<gene>
    <name evidence="2" type="primary">insig2</name>
</gene>
<proteinExistence type="evidence at transcript level"/>
<accession>Q66J27</accession>
<evidence type="ECO:0000250" key="1">
    <source>
        <dbReference type="UniProtKB" id="A1T557"/>
    </source>
</evidence>
<evidence type="ECO:0000250" key="2">
    <source>
        <dbReference type="UniProtKB" id="Q9Y5U4"/>
    </source>
</evidence>
<evidence type="ECO:0000305" key="3"/>
<reference key="1">
    <citation type="submission" date="2004-08" db="EMBL/GenBank/DDBJ databases">
        <authorList>
            <consortium name="NIH - Xenopus Gene Collection (XGC) project"/>
        </authorList>
    </citation>
    <scope>NUCLEOTIDE SEQUENCE [LARGE SCALE MRNA]</scope>
    <source>
        <tissue>Kidney</tissue>
    </source>
</reference>
<feature type="chain" id="PRO_0000286803" description="Insulin-induced gene 2 protein">
    <location>
        <begin position="1"/>
        <end position="218"/>
    </location>
</feature>
<feature type="topological domain" description="Cytoplasmic" evidence="3">
    <location>
        <begin position="1"/>
        <end position="21"/>
    </location>
</feature>
<feature type="transmembrane region" description="Helical; Name=1" evidence="1">
    <location>
        <begin position="22"/>
        <end position="44"/>
    </location>
</feature>
<feature type="topological domain" description="Lumenal" evidence="3">
    <location>
        <begin position="45"/>
        <end position="63"/>
    </location>
</feature>
<feature type="transmembrane region" description="Helical; Name=2" evidence="1">
    <location>
        <begin position="64"/>
        <end position="81"/>
    </location>
</feature>
<feature type="topological domain" description="Cytoplasmic" evidence="3">
    <location>
        <begin position="82"/>
        <end position="96"/>
    </location>
</feature>
<feature type="transmembrane region" description="Helical; Name=3" evidence="1">
    <location>
        <begin position="97"/>
        <end position="119"/>
    </location>
</feature>
<feature type="topological domain" description="Lumenal" evidence="3">
    <location>
        <begin position="120"/>
        <end position="122"/>
    </location>
</feature>
<feature type="transmembrane region" description="Helical; Name=4" evidence="1">
    <location>
        <begin position="123"/>
        <end position="141"/>
    </location>
</feature>
<feature type="topological domain" description="Cytoplasmic" evidence="3">
    <location>
        <begin position="142"/>
        <end position="146"/>
    </location>
</feature>
<feature type="transmembrane region" description="Helical; Name=5" evidence="1">
    <location>
        <begin position="147"/>
        <end position="168"/>
    </location>
</feature>
<feature type="topological domain" description="Lumenal" evidence="3">
    <location>
        <begin position="169"/>
        <end position="182"/>
    </location>
</feature>
<feature type="transmembrane region" description="Helical; Name=6" evidence="1">
    <location>
        <begin position="183"/>
        <end position="200"/>
    </location>
</feature>
<feature type="topological domain" description="Cytoplasmic" evidence="3">
    <location>
        <begin position="201"/>
        <end position="218"/>
    </location>
</feature>
<feature type="short sequence motif" description="KxHxx" evidence="2">
    <location>
        <begin position="212"/>
        <end position="218"/>
    </location>
</feature>
<feature type="site" description="Required for the recognition of 25-hydroxycholesterol" evidence="2">
    <location>
        <position position="108"/>
    </location>
</feature>
<dbReference type="EMBL" id="BC081084">
    <property type="protein sequence ID" value="AAH81084.1"/>
    <property type="molecule type" value="mRNA"/>
</dbReference>
<dbReference type="RefSeq" id="NP_001087688.1">
    <property type="nucleotide sequence ID" value="NM_001094219.1"/>
</dbReference>
<dbReference type="RefSeq" id="XP_018089979.1">
    <property type="nucleotide sequence ID" value="XM_018234490.1"/>
</dbReference>
<dbReference type="SMR" id="Q66J27"/>
<dbReference type="DNASU" id="447512"/>
<dbReference type="GeneID" id="447512"/>
<dbReference type="KEGG" id="xla:447512"/>
<dbReference type="AGR" id="Xenbase:XB-GENE-5777147"/>
<dbReference type="CTD" id="447512"/>
<dbReference type="Xenbase" id="XB-GENE-5777147">
    <property type="gene designation" value="insig2.L"/>
</dbReference>
<dbReference type="OMA" id="SKKCGPY"/>
<dbReference type="OrthoDB" id="205546at2759"/>
<dbReference type="Proteomes" id="UP000186698">
    <property type="component" value="Chromosome 9_10L"/>
</dbReference>
<dbReference type="Bgee" id="447512">
    <property type="expression patterns" value="Expressed in oocyte and 19 other cell types or tissues"/>
</dbReference>
<dbReference type="GO" id="GO:0005783">
    <property type="term" value="C:endoplasmic reticulum"/>
    <property type="evidence" value="ECO:0000318"/>
    <property type="project" value="GO_Central"/>
</dbReference>
<dbReference type="GO" id="GO:0032937">
    <property type="term" value="C:SREBP-SCAP-Insig complex"/>
    <property type="evidence" value="ECO:0000318"/>
    <property type="project" value="GO_Central"/>
</dbReference>
<dbReference type="GO" id="GO:0008142">
    <property type="term" value="F:oxysterol binding"/>
    <property type="evidence" value="ECO:0000250"/>
    <property type="project" value="UniProtKB"/>
</dbReference>
<dbReference type="GO" id="GO:0032869">
    <property type="term" value="P:cellular response to insulin stimulus"/>
    <property type="evidence" value="ECO:0000318"/>
    <property type="project" value="GO_Central"/>
</dbReference>
<dbReference type="GO" id="GO:0006695">
    <property type="term" value="P:cholesterol biosynthetic process"/>
    <property type="evidence" value="ECO:0000250"/>
    <property type="project" value="UniProtKB"/>
</dbReference>
<dbReference type="GO" id="GO:0032933">
    <property type="term" value="P:SREBP signaling pathway"/>
    <property type="evidence" value="ECO:0000250"/>
    <property type="project" value="UniProtKB"/>
</dbReference>
<dbReference type="GO" id="GO:0036316">
    <property type="term" value="P:SREBP-SCAP complex retention in endoplasmic reticulum"/>
    <property type="evidence" value="ECO:0000250"/>
    <property type="project" value="UniProtKB"/>
</dbReference>
<dbReference type="InterPro" id="IPR025929">
    <property type="entry name" value="INSIG_fam"/>
</dbReference>
<dbReference type="PANTHER" id="PTHR15301">
    <property type="entry name" value="INSULIN-INDUCED GENE 1"/>
    <property type="match status" value="1"/>
</dbReference>
<dbReference type="PANTHER" id="PTHR15301:SF10">
    <property type="entry name" value="INSULIN-INDUCED GENE 2 PROTEIN"/>
    <property type="match status" value="1"/>
</dbReference>
<dbReference type="Pfam" id="PF07281">
    <property type="entry name" value="INSIG"/>
    <property type="match status" value="1"/>
</dbReference>
<organism>
    <name type="scientific">Xenopus laevis</name>
    <name type="common">African clawed frog</name>
    <dbReference type="NCBI Taxonomy" id="8355"/>
    <lineage>
        <taxon>Eukaryota</taxon>
        <taxon>Metazoa</taxon>
        <taxon>Chordata</taxon>
        <taxon>Craniata</taxon>
        <taxon>Vertebrata</taxon>
        <taxon>Euteleostomi</taxon>
        <taxon>Amphibia</taxon>
        <taxon>Batrachia</taxon>
        <taxon>Anura</taxon>
        <taxon>Pipoidea</taxon>
        <taxon>Pipidae</taxon>
        <taxon>Xenopodinae</taxon>
        <taxon>Xenopus</taxon>
        <taxon>Xenopus</taxon>
    </lineage>
</organism>
<comment type="function">
    <text evidence="2">Oxysterol-binding protein that mediates feedback control of cholesterol synthesis by controlling both endoplasmic reticulum to Golgi transport of scap and degradation of hmgcr. Acts as a negative regulator of cholesterol biosynthesis by mediating the retention of the SCAP-SREBP complex in the endoplasmic reticulum, thereby blocking the processing of sterol regulatory element-binding proteins (SREBPs). Binds oxysterol, including 22-hydroxycholesterol, 24-hydroxycholesterol, 25-hydroxycholesterol and 27-hydroxycholesterol, regulating interaction with scap and retention of the SCAP-SREBP complex in the endoplasmic reticulum. In presence of oxysterol, interacts with scap, retaining the SCAP-SREBP complex in the endoplasmic reticulum, thereby preventing scap from escorting SREBPs to the Golgi. Sterol deprivation reduce oxysterol-binding, disrupting the interaction between insig2 and scap, thereby promoting Golgi transport of the SCAP-SREBP complex, followed by processing and nuclear translocation of SREBPs. Also regulates cholesterol synthesis by regulating degradation of hmgcr.</text>
</comment>
<comment type="subunit">
    <text evidence="2">Interacts with scap; interaction is direct and only takes place in the presence of sterols; it prevents interaction between scap and the coat protein complex II (COPII). Associates with the SCAP-SREBP complex; association is mediated via its interaction with scap and only takes place in the presence of sterols.</text>
</comment>
<comment type="subcellular location">
    <subcellularLocation>
        <location evidence="2">Endoplasmic reticulum membrane</location>
        <topology evidence="2">Multi-pass membrane protein</topology>
    </subcellularLocation>
</comment>
<comment type="domain">
    <text evidence="2">Binds oxysterols in a pocket within their transmembrane domains and interacts with scap via transmembrane domains 3 and 4.</text>
</comment>
<comment type="domain">
    <text evidence="2">The KxHxx motif mediates association with the coatomer complex.</text>
</comment>
<comment type="similarity">
    <text evidence="3">Belongs to the INSIG family.</text>
</comment>
<protein>
    <recommendedName>
        <fullName evidence="2">Insulin-induced gene 2 protein</fullName>
        <shortName evidence="2">INSIG-2</shortName>
    </recommendedName>
</protein>
<sequence>MGDRENVSYGSRPILAQKMNLLLRGFLLFLIGVFLALVLNLLQVQRNVTLFPPDVLSSLFSSAWWVPLCCGTAAAAIGLLYPCIDRHLGEPHKFKREWSSVMRCVAVFVGINHASAKVDFANNMQLSLTLAALSIGLWWTFDRSRSGLGLGIGISFFATLVSQLLVYNGVYEYTAPDFLYVRSWLPCIFFAGGITMGNIGRQLEMYERKALVEKSHRD</sequence>
<keyword id="KW-0153">Cholesterol metabolism</keyword>
<keyword id="KW-0256">Endoplasmic reticulum</keyword>
<keyword id="KW-0443">Lipid metabolism</keyword>
<keyword id="KW-0446">Lipid-binding</keyword>
<keyword id="KW-0472">Membrane</keyword>
<keyword id="KW-1185">Reference proteome</keyword>
<keyword id="KW-0753">Steroid metabolism</keyword>
<keyword id="KW-1207">Sterol metabolism</keyword>
<keyword id="KW-0812">Transmembrane</keyword>
<keyword id="KW-1133">Transmembrane helix</keyword>
<name>INSI2_XENLA</name>